<keyword id="KW-0067">ATP-binding</keyword>
<keyword id="KW-0131">Cell cycle</keyword>
<keyword id="KW-0132">Cell division</keyword>
<keyword id="KW-0133">Cell shape</keyword>
<keyword id="KW-0961">Cell wall biogenesis/degradation</keyword>
<keyword id="KW-0963">Cytoplasm</keyword>
<keyword id="KW-0436">Ligase</keyword>
<keyword id="KW-0547">Nucleotide-binding</keyword>
<keyword id="KW-0573">Peptidoglycan synthesis</keyword>
<keyword id="KW-1185">Reference proteome</keyword>
<accession>Q1GAT6</accession>
<proteinExistence type="inferred from homology"/>
<comment type="function">
    <text evidence="1">Cell wall formation. Catalyzes the addition of glutamate to the nucleotide precursor UDP-N-acetylmuramoyl-L-alanine (UMA).</text>
</comment>
<comment type="catalytic activity">
    <reaction evidence="1">
        <text>UDP-N-acetyl-alpha-D-muramoyl-L-alanine + D-glutamate + ATP = UDP-N-acetyl-alpha-D-muramoyl-L-alanyl-D-glutamate + ADP + phosphate + H(+)</text>
        <dbReference type="Rhea" id="RHEA:16429"/>
        <dbReference type="ChEBI" id="CHEBI:15378"/>
        <dbReference type="ChEBI" id="CHEBI:29986"/>
        <dbReference type="ChEBI" id="CHEBI:30616"/>
        <dbReference type="ChEBI" id="CHEBI:43474"/>
        <dbReference type="ChEBI" id="CHEBI:83898"/>
        <dbReference type="ChEBI" id="CHEBI:83900"/>
        <dbReference type="ChEBI" id="CHEBI:456216"/>
        <dbReference type="EC" id="6.3.2.9"/>
    </reaction>
</comment>
<comment type="pathway">
    <text evidence="1">Cell wall biogenesis; peptidoglycan biosynthesis.</text>
</comment>
<comment type="subcellular location">
    <subcellularLocation>
        <location evidence="1">Cytoplasm</location>
    </subcellularLocation>
</comment>
<comment type="similarity">
    <text evidence="1">Belongs to the MurCDEF family.</text>
</comment>
<feature type="chain" id="PRO_0000257197" description="UDP-N-acetylmuramoylalanine--D-glutamate ligase">
    <location>
        <begin position="1"/>
        <end position="460"/>
    </location>
</feature>
<feature type="binding site" evidence="1">
    <location>
        <begin position="120"/>
        <end position="126"/>
    </location>
    <ligand>
        <name>ATP</name>
        <dbReference type="ChEBI" id="CHEBI:30616"/>
    </ligand>
</feature>
<organism>
    <name type="scientific">Lactobacillus delbrueckii subsp. bulgaricus (strain ATCC 11842 / DSM 20081 / BCRC 10696 / JCM 1002 / NBRC 13953 / NCIMB 11778 / NCTC 12712 / WDCM 00102 / Lb 14)</name>
    <dbReference type="NCBI Taxonomy" id="390333"/>
    <lineage>
        <taxon>Bacteria</taxon>
        <taxon>Bacillati</taxon>
        <taxon>Bacillota</taxon>
        <taxon>Bacilli</taxon>
        <taxon>Lactobacillales</taxon>
        <taxon>Lactobacillaceae</taxon>
        <taxon>Lactobacillus</taxon>
    </lineage>
</organism>
<name>MURD_LACDA</name>
<protein>
    <recommendedName>
        <fullName evidence="1">UDP-N-acetylmuramoylalanine--D-glutamate ligase</fullName>
        <ecNumber evidence="1">6.3.2.9</ecNumber>
    </recommendedName>
    <alternativeName>
        <fullName evidence="1">D-glutamic acid-adding enzyme</fullName>
    </alternativeName>
    <alternativeName>
        <fullName evidence="1">UDP-N-acetylmuramoyl-L-alanyl-D-glutamate synthetase</fullName>
    </alternativeName>
</protein>
<reference key="1">
    <citation type="journal article" date="2006" name="Proc. Natl. Acad. Sci. U.S.A.">
        <title>The complete genome sequence of Lactobacillus bulgaricus reveals extensive and ongoing reductive evolution.</title>
        <authorList>
            <person name="van de Guchte M."/>
            <person name="Penaud S."/>
            <person name="Grimaldi C."/>
            <person name="Barbe V."/>
            <person name="Bryson K."/>
            <person name="Nicolas P."/>
            <person name="Robert C."/>
            <person name="Oztas S."/>
            <person name="Mangenot S."/>
            <person name="Couloux A."/>
            <person name="Loux V."/>
            <person name="Dervyn R."/>
            <person name="Bossy R."/>
            <person name="Bolotin A."/>
            <person name="Batto J.-M."/>
            <person name="Walunas T."/>
            <person name="Gibrat J.-F."/>
            <person name="Bessieres P."/>
            <person name="Weissenbach J."/>
            <person name="Ehrlich S.D."/>
            <person name="Maguin E."/>
        </authorList>
    </citation>
    <scope>NUCLEOTIDE SEQUENCE [LARGE SCALE GENOMIC DNA]</scope>
    <source>
        <strain>ATCC 11842 / DSM 20081 / BCRC 10696 / JCM 1002 / NBRC 13953 / NCIMB 11778 / NCTC 12712 / WDCM 00102 / Lb 14</strain>
    </source>
</reference>
<sequence length="460" mass="50353">MKEIDKYAGKNILVLGLGRSGFAVSKLLLKLGARLTLNDKADLAADPKAKQLADLGVRVIGGSHPVDLFDQEKFDYLVKNPGIPYENPMVAKASEKGVPIITEPEVALSASESPYVCVTGSNGKTTTVMLTQQIMDHYLQKQGHHAHAVGNIGCPISEVVLNQAGPDDLLVVEMSSFQLMGVTDIEPKVAAIVDIYNNVHLDYHKTFDNYVDAKLNVGRFQKASDYFLANFDQKDILAREEKATKAKILTFSENDPVADFYIGQDYLMHGEEKMMKIADIKLPGIHNLQNSLVAIGISSLMGAGKDDIAAVLSTFTGAEHRLQYVTTLDGVKVYNDSKSTNIEAATVAIQSFKQPEVLLAGGLDRGFVFDSLVDLFKKHVKAIVTYGETRYLLADAARKAGIKTIVVVDNLHEGVKAASKLAEAGDVLLFSPACASWDQFKTFEERGEYFVKYVKELEEK</sequence>
<dbReference type="EC" id="6.3.2.9" evidence="1"/>
<dbReference type="EMBL" id="CR954253">
    <property type="protein sequence ID" value="CAI97567.1"/>
    <property type="molecule type" value="Genomic_DNA"/>
</dbReference>
<dbReference type="RefSeq" id="WP_011543774.1">
    <property type="nucleotide sequence ID" value="NC_008054.1"/>
</dbReference>
<dbReference type="SMR" id="Q1GAT6"/>
<dbReference type="STRING" id="390333.Ldb0740"/>
<dbReference type="KEGG" id="ldb:Ldb0740"/>
<dbReference type="PATRIC" id="fig|390333.13.peg.59"/>
<dbReference type="eggNOG" id="COG0771">
    <property type="taxonomic scope" value="Bacteria"/>
</dbReference>
<dbReference type="HOGENOM" id="CLU_032540_0_1_9"/>
<dbReference type="BioCyc" id="LDEL390333:LDB_RS03245-MONOMER"/>
<dbReference type="UniPathway" id="UPA00219"/>
<dbReference type="Proteomes" id="UP000001259">
    <property type="component" value="Chromosome"/>
</dbReference>
<dbReference type="GO" id="GO:0005737">
    <property type="term" value="C:cytoplasm"/>
    <property type="evidence" value="ECO:0007669"/>
    <property type="project" value="UniProtKB-SubCell"/>
</dbReference>
<dbReference type="GO" id="GO:0005524">
    <property type="term" value="F:ATP binding"/>
    <property type="evidence" value="ECO:0007669"/>
    <property type="project" value="UniProtKB-UniRule"/>
</dbReference>
<dbReference type="GO" id="GO:0008764">
    <property type="term" value="F:UDP-N-acetylmuramoylalanine-D-glutamate ligase activity"/>
    <property type="evidence" value="ECO:0007669"/>
    <property type="project" value="UniProtKB-UniRule"/>
</dbReference>
<dbReference type="GO" id="GO:0051301">
    <property type="term" value="P:cell division"/>
    <property type="evidence" value="ECO:0007669"/>
    <property type="project" value="UniProtKB-KW"/>
</dbReference>
<dbReference type="GO" id="GO:0071555">
    <property type="term" value="P:cell wall organization"/>
    <property type="evidence" value="ECO:0007669"/>
    <property type="project" value="UniProtKB-KW"/>
</dbReference>
<dbReference type="GO" id="GO:0009252">
    <property type="term" value="P:peptidoglycan biosynthetic process"/>
    <property type="evidence" value="ECO:0007669"/>
    <property type="project" value="UniProtKB-UniRule"/>
</dbReference>
<dbReference type="GO" id="GO:0008360">
    <property type="term" value="P:regulation of cell shape"/>
    <property type="evidence" value="ECO:0007669"/>
    <property type="project" value="UniProtKB-KW"/>
</dbReference>
<dbReference type="Gene3D" id="3.90.190.20">
    <property type="entry name" value="Mur ligase, C-terminal domain"/>
    <property type="match status" value="1"/>
</dbReference>
<dbReference type="Gene3D" id="3.40.1190.10">
    <property type="entry name" value="Mur-like, catalytic domain"/>
    <property type="match status" value="1"/>
</dbReference>
<dbReference type="Gene3D" id="3.40.50.720">
    <property type="entry name" value="NAD(P)-binding Rossmann-like Domain"/>
    <property type="match status" value="1"/>
</dbReference>
<dbReference type="HAMAP" id="MF_00639">
    <property type="entry name" value="MurD"/>
    <property type="match status" value="1"/>
</dbReference>
<dbReference type="InterPro" id="IPR036565">
    <property type="entry name" value="Mur-like_cat_sf"/>
</dbReference>
<dbReference type="InterPro" id="IPR004101">
    <property type="entry name" value="Mur_ligase_C"/>
</dbReference>
<dbReference type="InterPro" id="IPR036615">
    <property type="entry name" value="Mur_ligase_C_dom_sf"/>
</dbReference>
<dbReference type="InterPro" id="IPR013221">
    <property type="entry name" value="Mur_ligase_cen"/>
</dbReference>
<dbReference type="InterPro" id="IPR005762">
    <property type="entry name" value="MurD"/>
</dbReference>
<dbReference type="NCBIfam" id="TIGR01087">
    <property type="entry name" value="murD"/>
    <property type="match status" value="1"/>
</dbReference>
<dbReference type="PANTHER" id="PTHR43692">
    <property type="entry name" value="UDP-N-ACETYLMURAMOYLALANINE--D-GLUTAMATE LIGASE"/>
    <property type="match status" value="1"/>
</dbReference>
<dbReference type="PANTHER" id="PTHR43692:SF1">
    <property type="entry name" value="UDP-N-ACETYLMURAMOYLALANINE--D-GLUTAMATE LIGASE"/>
    <property type="match status" value="1"/>
</dbReference>
<dbReference type="Pfam" id="PF02875">
    <property type="entry name" value="Mur_ligase_C"/>
    <property type="match status" value="1"/>
</dbReference>
<dbReference type="Pfam" id="PF08245">
    <property type="entry name" value="Mur_ligase_M"/>
    <property type="match status" value="1"/>
</dbReference>
<dbReference type="Pfam" id="PF21799">
    <property type="entry name" value="MurD-like_N"/>
    <property type="match status" value="1"/>
</dbReference>
<dbReference type="SUPFAM" id="SSF51984">
    <property type="entry name" value="MurCD N-terminal domain"/>
    <property type="match status" value="1"/>
</dbReference>
<dbReference type="SUPFAM" id="SSF53623">
    <property type="entry name" value="MurD-like peptide ligases, catalytic domain"/>
    <property type="match status" value="1"/>
</dbReference>
<dbReference type="SUPFAM" id="SSF53244">
    <property type="entry name" value="MurD-like peptide ligases, peptide-binding domain"/>
    <property type="match status" value="1"/>
</dbReference>
<evidence type="ECO:0000255" key="1">
    <source>
        <dbReference type="HAMAP-Rule" id="MF_00639"/>
    </source>
</evidence>
<gene>
    <name evidence="1" type="primary">murD</name>
    <name type="ordered locus">Ldb0740</name>
</gene>